<comment type="function">
    <text evidence="1">Leech salivary gland peptide with unknown function.</text>
</comment>
<comment type="subcellular location">
    <subcellularLocation>
        <location evidence="1">Secreted</location>
    </subcellularLocation>
</comment>
<comment type="tissue specificity">
    <text evidence="1">Expressed in salivary glands. Highly expressed in the head, body and tail with a 2-3-fold higher expression in the head.</text>
</comment>
<comment type="miscellaneous">
    <text evidence="1">Does not show effect on voltage-gated calcium channels, potassium channels, and tetrodotoxin-sensitive sodium channels. Does not show activity on Nav1.7/SCN9A, and shows very weak activity on cation channel TRPA1.</text>
</comment>
<comment type="similarity">
    <text evidence="4">Belongs to the annelide toxin family.</text>
</comment>
<proteinExistence type="inferred from homology"/>
<sequence>MRTLLVFLLLTILVAVLIGNNQVEACTNNADCHGLGHCYRGTCFPVMG</sequence>
<keyword id="KW-0027">Amidation</keyword>
<keyword id="KW-1015">Disulfide bond</keyword>
<keyword id="KW-0964">Secreted</keyword>
<keyword id="KW-0732">Signal</keyword>
<evidence type="ECO:0000250" key="1">
    <source>
        <dbReference type="UniProtKB" id="A0A2L1DGG0"/>
    </source>
</evidence>
<evidence type="ECO:0000255" key="2"/>
<evidence type="ECO:0000303" key="3">
    <source>
    </source>
</evidence>
<evidence type="ECO:0000305" key="4"/>
<organism>
    <name type="scientific">Haemadipsa sylvestris</name>
    <name type="common">Indian leech</name>
    <dbReference type="NCBI Taxonomy" id="13555"/>
    <lineage>
        <taxon>Eukaryota</taxon>
        <taxon>Metazoa</taxon>
        <taxon>Spiralia</taxon>
        <taxon>Lophotrochozoa</taxon>
        <taxon>Annelida</taxon>
        <taxon>Clitellata</taxon>
        <taxon>Hirudinea</taxon>
        <taxon>Hirudinida</taxon>
        <taxon>Hirudiniformes</taxon>
        <taxon>Haemadipsidae</taxon>
        <taxon>Haemadipsa</taxon>
    </lineage>
</organism>
<accession>P0DUG8</accession>
<protein>
    <recommendedName>
        <fullName evidence="3">Peptide HSTX-V</fullName>
    </recommendedName>
</protein>
<name>HSTX5_HAESL</name>
<reference key="1">
    <citation type="journal article" date="2018" name="Front. Pharmacol.">
        <title>Novel sodium channel inhibitor from leeches.</title>
        <authorList>
            <person name="Wang G."/>
            <person name="Long C."/>
            <person name="Liu W."/>
            <person name="Xu C."/>
            <person name="Zhang M."/>
            <person name="Li Q."/>
            <person name="Lu Q."/>
            <person name="Meng P."/>
            <person name="Li D."/>
            <person name="Rong M."/>
            <person name="Sun Z."/>
            <person name="Luo X."/>
            <person name="Lai R."/>
        </authorList>
    </citation>
    <scope>NUCLEOTIDE SEQUENCE [MRNA]</scope>
    <source>
        <tissue>Salivary gland</tissue>
    </source>
</reference>
<feature type="signal peptide" evidence="2">
    <location>
        <begin position="1"/>
        <end position="21"/>
    </location>
</feature>
<feature type="propeptide" id="PRO_0000452222" evidence="1">
    <location>
        <begin position="22"/>
        <end position="27"/>
    </location>
</feature>
<feature type="peptide" id="PRO_0000452223" description="Peptide HSTX-V" evidence="1">
    <location>
        <begin position="25"/>
        <end position="47"/>
    </location>
</feature>
<feature type="modified residue" description="Methionine amide" evidence="1">
    <location>
        <position position="47"/>
    </location>
</feature>
<feature type="disulfide bond" evidence="1">
    <location>
        <begin position="26"/>
        <end position="38"/>
    </location>
</feature>
<feature type="disulfide bond" evidence="1">
    <location>
        <begin position="32"/>
        <end position="43"/>
    </location>
</feature>
<dbReference type="GO" id="GO:0005576">
    <property type="term" value="C:extracellular region"/>
    <property type="evidence" value="ECO:0007669"/>
    <property type="project" value="UniProtKB-SubCell"/>
</dbReference>